<accession>Q8PLP9</accession>
<dbReference type="EMBL" id="AE008923">
    <property type="protein sequence ID" value="AAM36610.1"/>
    <property type="molecule type" value="Genomic_DNA"/>
</dbReference>
<dbReference type="RefSeq" id="WP_003481884.1">
    <property type="nucleotide sequence ID" value="NC_003919.1"/>
</dbReference>
<dbReference type="SMR" id="Q8PLP9"/>
<dbReference type="GeneID" id="97510119"/>
<dbReference type="KEGG" id="xac:XAC1743"/>
<dbReference type="eggNOG" id="COG1551">
    <property type="taxonomic scope" value="Bacteria"/>
</dbReference>
<dbReference type="HOGENOM" id="CLU_164837_2_1_6"/>
<dbReference type="Proteomes" id="UP000000576">
    <property type="component" value="Chromosome"/>
</dbReference>
<dbReference type="GO" id="GO:0005829">
    <property type="term" value="C:cytosol"/>
    <property type="evidence" value="ECO:0007669"/>
    <property type="project" value="TreeGrafter"/>
</dbReference>
<dbReference type="GO" id="GO:0048027">
    <property type="term" value="F:mRNA 5'-UTR binding"/>
    <property type="evidence" value="ECO:0007669"/>
    <property type="project" value="UniProtKB-UniRule"/>
</dbReference>
<dbReference type="GO" id="GO:0006402">
    <property type="term" value="P:mRNA catabolic process"/>
    <property type="evidence" value="ECO:0007669"/>
    <property type="project" value="InterPro"/>
</dbReference>
<dbReference type="GO" id="GO:0045947">
    <property type="term" value="P:negative regulation of translational initiation"/>
    <property type="evidence" value="ECO:0007669"/>
    <property type="project" value="UniProtKB-UniRule"/>
</dbReference>
<dbReference type="GO" id="GO:0045948">
    <property type="term" value="P:positive regulation of translational initiation"/>
    <property type="evidence" value="ECO:0007669"/>
    <property type="project" value="UniProtKB-UniRule"/>
</dbReference>
<dbReference type="GO" id="GO:0006109">
    <property type="term" value="P:regulation of carbohydrate metabolic process"/>
    <property type="evidence" value="ECO:0007669"/>
    <property type="project" value="UniProtKB-UniRule"/>
</dbReference>
<dbReference type="FunFam" id="2.60.40.4380:FF:000001">
    <property type="entry name" value="Translational regulator CsrA"/>
    <property type="match status" value="1"/>
</dbReference>
<dbReference type="Gene3D" id="2.60.40.4380">
    <property type="entry name" value="Translational regulator CsrA"/>
    <property type="match status" value="1"/>
</dbReference>
<dbReference type="HAMAP" id="MF_00167">
    <property type="entry name" value="CsrA"/>
    <property type="match status" value="1"/>
</dbReference>
<dbReference type="InterPro" id="IPR003751">
    <property type="entry name" value="CsrA"/>
</dbReference>
<dbReference type="InterPro" id="IPR036107">
    <property type="entry name" value="CsrA_sf"/>
</dbReference>
<dbReference type="NCBIfam" id="TIGR00202">
    <property type="entry name" value="csrA"/>
    <property type="match status" value="1"/>
</dbReference>
<dbReference type="NCBIfam" id="NF002469">
    <property type="entry name" value="PRK01712.1"/>
    <property type="match status" value="1"/>
</dbReference>
<dbReference type="PANTHER" id="PTHR34984">
    <property type="entry name" value="CARBON STORAGE REGULATOR"/>
    <property type="match status" value="1"/>
</dbReference>
<dbReference type="PANTHER" id="PTHR34984:SF1">
    <property type="entry name" value="CARBON STORAGE REGULATOR"/>
    <property type="match status" value="1"/>
</dbReference>
<dbReference type="Pfam" id="PF02599">
    <property type="entry name" value="CsrA"/>
    <property type="match status" value="1"/>
</dbReference>
<dbReference type="SUPFAM" id="SSF117130">
    <property type="entry name" value="CsrA-like"/>
    <property type="match status" value="1"/>
</dbReference>
<organism>
    <name type="scientific">Xanthomonas axonopodis pv. citri (strain 306)</name>
    <dbReference type="NCBI Taxonomy" id="190486"/>
    <lineage>
        <taxon>Bacteria</taxon>
        <taxon>Pseudomonadati</taxon>
        <taxon>Pseudomonadota</taxon>
        <taxon>Gammaproteobacteria</taxon>
        <taxon>Lysobacterales</taxon>
        <taxon>Lysobacteraceae</taxon>
        <taxon>Xanthomonas</taxon>
    </lineage>
</organism>
<feature type="chain" id="PRO_0000177100" description="Translational regulator CsrA">
    <location>
        <begin position="1"/>
        <end position="70"/>
    </location>
</feature>
<feature type="region of interest" description="Disordered" evidence="2">
    <location>
        <begin position="51"/>
        <end position="70"/>
    </location>
</feature>
<sequence>MLILTRRVGETLMIGDSVTVTVLGVKGNQVRIGITAPKDVAVHREEIYQRIQRGDEPVASGAHHGDDSSN</sequence>
<protein>
    <recommendedName>
        <fullName evidence="1">Translational regulator CsrA</fullName>
    </recommendedName>
    <alternativeName>
        <fullName evidence="1">Carbon storage regulator</fullName>
    </alternativeName>
</protein>
<evidence type="ECO:0000255" key="1">
    <source>
        <dbReference type="HAMAP-Rule" id="MF_00167"/>
    </source>
</evidence>
<evidence type="ECO:0000256" key="2">
    <source>
        <dbReference type="SAM" id="MobiDB-lite"/>
    </source>
</evidence>
<keyword id="KW-0010">Activator</keyword>
<keyword id="KW-0963">Cytoplasm</keyword>
<keyword id="KW-0678">Repressor</keyword>
<keyword id="KW-0694">RNA-binding</keyword>
<keyword id="KW-0810">Translation regulation</keyword>
<comment type="function">
    <text evidence="1">A key translational regulator that binds mRNA to regulate translation initiation and/or mRNA stability. Mediates global changes in gene expression, shifting from rapid growth to stress survival by linking envelope stress, the stringent response and the catabolite repression systems. Usually binds in the 5'-UTR; binding at or near the Shine-Dalgarno sequence prevents ribosome-binding, repressing translation, binding elsewhere in the 5'-UTR can activate translation and/or stabilize the mRNA. Its function is antagonized by small RNA(s).</text>
</comment>
<comment type="subunit">
    <text evidence="1">Homodimer; the beta-strands of each monomer intercalate to form a hydrophobic core, while the alpha-helices form wings that extend away from the core.</text>
</comment>
<comment type="subcellular location">
    <subcellularLocation>
        <location evidence="1">Cytoplasm</location>
    </subcellularLocation>
</comment>
<comment type="similarity">
    <text evidence="1">Belongs to the CsrA/RsmA family.</text>
</comment>
<reference key="1">
    <citation type="journal article" date="2002" name="Nature">
        <title>Comparison of the genomes of two Xanthomonas pathogens with differing host specificities.</title>
        <authorList>
            <person name="da Silva A.C.R."/>
            <person name="Ferro J.A."/>
            <person name="Reinach F.C."/>
            <person name="Farah C.S."/>
            <person name="Furlan L.R."/>
            <person name="Quaggio R.B."/>
            <person name="Monteiro-Vitorello C.B."/>
            <person name="Van Sluys M.A."/>
            <person name="Almeida N.F. Jr."/>
            <person name="Alves L.M.C."/>
            <person name="do Amaral A.M."/>
            <person name="Bertolini M.C."/>
            <person name="Camargo L.E.A."/>
            <person name="Camarotte G."/>
            <person name="Cannavan F."/>
            <person name="Cardozo J."/>
            <person name="Chambergo F."/>
            <person name="Ciapina L.P."/>
            <person name="Cicarelli R.M.B."/>
            <person name="Coutinho L.L."/>
            <person name="Cursino-Santos J.R."/>
            <person name="El-Dorry H."/>
            <person name="Faria J.B."/>
            <person name="Ferreira A.J.S."/>
            <person name="Ferreira R.C.C."/>
            <person name="Ferro M.I.T."/>
            <person name="Formighieri E.F."/>
            <person name="Franco M.C."/>
            <person name="Greggio C.C."/>
            <person name="Gruber A."/>
            <person name="Katsuyama A.M."/>
            <person name="Kishi L.T."/>
            <person name="Leite R.P."/>
            <person name="Lemos E.G.M."/>
            <person name="Lemos M.V.F."/>
            <person name="Locali E.C."/>
            <person name="Machado M.A."/>
            <person name="Madeira A.M.B.N."/>
            <person name="Martinez-Rossi N.M."/>
            <person name="Martins E.C."/>
            <person name="Meidanis J."/>
            <person name="Menck C.F.M."/>
            <person name="Miyaki C.Y."/>
            <person name="Moon D.H."/>
            <person name="Moreira L.M."/>
            <person name="Novo M.T.M."/>
            <person name="Okura V.K."/>
            <person name="Oliveira M.C."/>
            <person name="Oliveira V.R."/>
            <person name="Pereira H.A."/>
            <person name="Rossi A."/>
            <person name="Sena J.A.D."/>
            <person name="Silva C."/>
            <person name="de Souza R.F."/>
            <person name="Spinola L.A.F."/>
            <person name="Takita M.A."/>
            <person name="Tamura R.E."/>
            <person name="Teixeira E.C."/>
            <person name="Tezza R.I.D."/>
            <person name="Trindade dos Santos M."/>
            <person name="Truffi D."/>
            <person name="Tsai S.M."/>
            <person name="White F.F."/>
            <person name="Setubal J.C."/>
            <person name="Kitajima J.P."/>
        </authorList>
    </citation>
    <scope>NUCLEOTIDE SEQUENCE [LARGE SCALE GENOMIC DNA]</scope>
    <source>
        <strain>306</strain>
    </source>
</reference>
<gene>
    <name evidence="1" type="primary">csrA</name>
    <name type="ordered locus">XAC1743</name>
</gene>
<name>CSRA_XANAC</name>
<proteinExistence type="inferred from homology"/>